<accession>P59844</accession>
<dbReference type="EMBL" id="AE017143">
    <property type="protein sequence ID" value="AAP95049.1"/>
    <property type="molecule type" value="Genomic_DNA"/>
</dbReference>
<dbReference type="RefSeq" id="WP_010944103.1">
    <property type="nucleotide sequence ID" value="NC_002940.2"/>
</dbReference>
<dbReference type="SMR" id="P59844"/>
<dbReference type="STRING" id="233412.HD_0034"/>
<dbReference type="GeneID" id="60733408"/>
<dbReference type="KEGG" id="hdu:HD_0034"/>
<dbReference type="eggNOG" id="COG3080">
    <property type="taxonomic scope" value="Bacteria"/>
</dbReference>
<dbReference type="HOGENOM" id="CLU_168367_0_0_6"/>
<dbReference type="OrthoDB" id="9804636at2"/>
<dbReference type="Proteomes" id="UP000001022">
    <property type="component" value="Chromosome"/>
</dbReference>
<dbReference type="GO" id="GO:0045283">
    <property type="term" value="C:fumarate reductase complex"/>
    <property type="evidence" value="ECO:0007669"/>
    <property type="project" value="UniProtKB-UniRule"/>
</dbReference>
<dbReference type="GO" id="GO:0005886">
    <property type="term" value="C:plasma membrane"/>
    <property type="evidence" value="ECO:0007669"/>
    <property type="project" value="UniProtKB-SubCell"/>
</dbReference>
<dbReference type="GO" id="GO:0000104">
    <property type="term" value="F:succinate dehydrogenase activity"/>
    <property type="evidence" value="ECO:0007669"/>
    <property type="project" value="UniProtKB-UniRule"/>
</dbReference>
<dbReference type="GO" id="GO:0006106">
    <property type="term" value="P:fumarate metabolic process"/>
    <property type="evidence" value="ECO:0007669"/>
    <property type="project" value="InterPro"/>
</dbReference>
<dbReference type="CDD" id="cd00547">
    <property type="entry name" value="QFR_TypeD_subunitD"/>
    <property type="match status" value="1"/>
</dbReference>
<dbReference type="Gene3D" id="1.20.1300.10">
    <property type="entry name" value="Fumarate reductase/succinate dehydrogenase, transmembrane subunit"/>
    <property type="match status" value="1"/>
</dbReference>
<dbReference type="HAMAP" id="MF_00709">
    <property type="entry name" value="Fumarate_red_D"/>
    <property type="match status" value="1"/>
</dbReference>
<dbReference type="InterPro" id="IPR003418">
    <property type="entry name" value="Fumarate_red_D"/>
</dbReference>
<dbReference type="InterPro" id="IPR034804">
    <property type="entry name" value="SQR/QFR_C/D"/>
</dbReference>
<dbReference type="NCBIfam" id="NF003977">
    <property type="entry name" value="PRK05470.1-1"/>
    <property type="match status" value="1"/>
</dbReference>
<dbReference type="Pfam" id="PF02313">
    <property type="entry name" value="Fumarate_red_D"/>
    <property type="match status" value="1"/>
</dbReference>
<dbReference type="PIRSF" id="PIRSF000179">
    <property type="entry name" value="FrdD"/>
    <property type="match status" value="1"/>
</dbReference>
<dbReference type="SUPFAM" id="SSF81343">
    <property type="entry name" value="Fumarate reductase respiratory complex transmembrane subunits"/>
    <property type="match status" value="1"/>
</dbReference>
<protein>
    <recommendedName>
        <fullName evidence="1">Fumarate reductase subunit D</fullName>
    </recommendedName>
    <alternativeName>
        <fullName evidence="1">Quinol-fumarate reductase subunit D</fullName>
        <shortName evidence="1">QFR subunit D</shortName>
    </alternativeName>
</protein>
<reference key="1">
    <citation type="submission" date="2003-06" db="EMBL/GenBank/DDBJ databases">
        <title>The complete genome sequence of Haemophilus ducreyi.</title>
        <authorList>
            <person name="Munson R.S. Jr."/>
            <person name="Ray W.C."/>
            <person name="Mahairas G."/>
            <person name="Sabo P."/>
            <person name="Mungur R."/>
            <person name="Johnson L."/>
            <person name="Nguyen D."/>
            <person name="Wang J."/>
            <person name="Forst C."/>
            <person name="Hood L."/>
        </authorList>
    </citation>
    <scope>NUCLEOTIDE SEQUENCE [LARGE SCALE GENOMIC DNA]</scope>
    <source>
        <strain>35000HP / ATCC 700724</strain>
    </source>
</reference>
<gene>
    <name evidence="1" type="primary">frdD</name>
    <name type="ordered locus">HD_0034</name>
</gene>
<keyword id="KW-0997">Cell inner membrane</keyword>
<keyword id="KW-1003">Cell membrane</keyword>
<keyword id="KW-0472">Membrane</keyword>
<keyword id="KW-1185">Reference proteome</keyword>
<keyword id="KW-0812">Transmembrane</keyword>
<keyword id="KW-1133">Transmembrane helix</keyword>
<organism>
    <name type="scientific">Haemophilus ducreyi (strain 35000HP / ATCC 700724)</name>
    <dbReference type="NCBI Taxonomy" id="233412"/>
    <lineage>
        <taxon>Bacteria</taxon>
        <taxon>Pseudomonadati</taxon>
        <taxon>Pseudomonadota</taxon>
        <taxon>Gammaproteobacteria</taxon>
        <taxon>Pasteurellales</taxon>
        <taxon>Pasteurellaceae</taxon>
        <taxon>Haemophilus</taxon>
    </lineage>
</organism>
<proteinExistence type="inferred from homology"/>
<name>FRDD_HAEDU</name>
<feature type="chain" id="PRO_0000196545" description="Fumarate reductase subunit D">
    <location>
        <begin position="1"/>
        <end position="114"/>
    </location>
</feature>
<feature type="transmembrane region" description="Helical" evidence="1">
    <location>
        <begin position="27"/>
        <end position="47"/>
    </location>
</feature>
<feature type="transmembrane region" description="Helical" evidence="1">
    <location>
        <begin position="50"/>
        <end position="70"/>
    </location>
</feature>
<feature type="transmembrane region" description="Helical" evidence="1">
    <location>
        <begin position="94"/>
        <end position="114"/>
    </location>
</feature>
<evidence type="ECO:0000255" key="1">
    <source>
        <dbReference type="HAMAP-Rule" id="MF_00709"/>
    </source>
</evidence>
<comment type="function">
    <text evidence="1">Anchors the catalytic components of the fumarate reductase complex to the cell membrane, binds quinones.</text>
</comment>
<comment type="subunit">
    <text evidence="1">Part of an enzyme complex containing four subunits: a flavoprotein (FrdA), an iron-sulfur protein (FrdB), and two hydrophobic anchor proteins (FrdC and FrdD).</text>
</comment>
<comment type="subcellular location">
    <subcellularLocation>
        <location evidence="1">Cell inner membrane</location>
        <topology evidence="1">Multi-pass membrane protein</topology>
    </subcellularLocation>
</comment>
<comment type="similarity">
    <text evidence="1">Belongs to the FrdD family.</text>
</comment>
<sequence length="114" mass="12623">MNKQDPKRSNEPPVWLMFSAGGTISAICFPVLILILGILLPLGLIPMDNIIVFAHTWLGKLVILAVTIFPMWAGMHRVHHGLHDLKIHLPASGWLFYGLSTLYSIVVLFAVIAL</sequence>